<proteinExistence type="inferred from homology"/>
<sequence>MSSYQSEYNADEQAAIDKEFTRLANNKSIYLDHAGTTLYAESQVTAAAEQLQRDVICNPHTCRVTGDYVDQVRFKLLEFFNTKEDEYHVIFTANATAALSLVAENFDFGRQGNFHYCQENHTSVLGMRERVQARAMYMLKEEEITGMASVPSAANGVSGSSPGDNSLVTFSAQCNFSGYKIPLAAIAGIQKQGLPHGLGKKISGEAPQTTDNNNYYVCLDAASFVATNPLDLQRYRPDYVCISFYKIFGYPTGVGALLVSRRGAEAFRKKRNFFGGGTINYAYPHAMDHQLREVFHQRYEDGTLPFLSIVGLLEGFRTLERLVPRRSVNGGDVATMERISRHVHGLAQHLEKQLRQLKYPNGQPLIELYNRVGYEERHRQGGIVAFNVRTDAGPFVGFGEIACVAALQGILLRTGCFCNIGACQRYLGLDETMMDAIYKRAGRICGDYYDLIDGQPTGAVRVSFGYMTRRQDVDELLKMLHLSYLATKPQQRLQLIEEQAGELPKALKERAQRLRPQLLQLAIYPVKSCAAFKIEEGGGSGGGGSGGTWPLTAQGLQYDREWMIVDMNGMAVTQKRCSELCLIRPLIRDDQLVLHFGDSPDGVSLPLSLADQAENSSRCRSKVCRQPVEGLDCGDEVALWLSQHLGLEGLRLLRQSSQRSTTNGVRQQQKLSLVNQAQFLLVNRSSVRSLQFEESLDETVDRFRANIIIDTGSAFEELSYKQLTIGQVQFQVEGPCQRCDMICINQRTGERSPETLTTISRLQSGKMRFGIYISRISTENNKESQHLTCGDVVVVT</sequence>
<gene>
    <name evidence="2" type="primary">mal</name>
    <name type="ORF">GL15793</name>
</gene>
<accession>B4H0S8</accession>
<protein>
    <recommendedName>
        <fullName evidence="2">Molybdenum cofactor sulfurase</fullName>
        <shortName evidence="2">MCS</shortName>
        <shortName evidence="2">MOS</shortName>
        <shortName evidence="2">MoCo sulfurase</shortName>
        <ecNumber evidence="2">2.8.1.9</ecNumber>
    </recommendedName>
    <alternativeName>
        <fullName evidence="2">Molybdenum cofactor sulfurtransferase</fullName>
    </alternativeName>
    <alternativeName>
        <fullName evidence="2">Protein maroon-like</fullName>
        <shortName evidence="2">Ma-l</shortName>
    </alternativeName>
</protein>
<organism>
    <name type="scientific">Drosophila persimilis</name>
    <name type="common">Fruit fly</name>
    <dbReference type="NCBI Taxonomy" id="7234"/>
    <lineage>
        <taxon>Eukaryota</taxon>
        <taxon>Metazoa</taxon>
        <taxon>Ecdysozoa</taxon>
        <taxon>Arthropoda</taxon>
        <taxon>Hexapoda</taxon>
        <taxon>Insecta</taxon>
        <taxon>Pterygota</taxon>
        <taxon>Neoptera</taxon>
        <taxon>Endopterygota</taxon>
        <taxon>Diptera</taxon>
        <taxon>Brachycera</taxon>
        <taxon>Muscomorpha</taxon>
        <taxon>Ephydroidea</taxon>
        <taxon>Drosophilidae</taxon>
        <taxon>Drosophila</taxon>
        <taxon>Sophophora</taxon>
    </lineage>
</organism>
<evidence type="ECO:0000250" key="1"/>
<evidence type="ECO:0000255" key="2">
    <source>
        <dbReference type="HAMAP-Rule" id="MF_03050"/>
    </source>
</evidence>
<comment type="function">
    <text evidence="2">Sulfurates the molybdenum cofactor. Sulfation of molybdenum is essential for xanthine dehydrogenase (XDH) and aldehyde oxidase (ADO) enzymes in which molybdenum cofactor is liganded by 1 oxygen and 1 sulfur atom in active form.</text>
</comment>
<comment type="catalytic activity">
    <reaction evidence="2">
        <text>Mo-molybdopterin + L-cysteine + AH2 = thio-Mo-molybdopterin + L-alanine + A + H2O</text>
        <dbReference type="Rhea" id="RHEA:42636"/>
        <dbReference type="ChEBI" id="CHEBI:13193"/>
        <dbReference type="ChEBI" id="CHEBI:15377"/>
        <dbReference type="ChEBI" id="CHEBI:17499"/>
        <dbReference type="ChEBI" id="CHEBI:35235"/>
        <dbReference type="ChEBI" id="CHEBI:57972"/>
        <dbReference type="ChEBI" id="CHEBI:71302"/>
        <dbReference type="ChEBI" id="CHEBI:82685"/>
        <dbReference type="EC" id="2.8.1.9"/>
    </reaction>
</comment>
<comment type="cofactor">
    <cofactor evidence="2">
        <name>pyridoxal 5'-phosphate</name>
        <dbReference type="ChEBI" id="CHEBI:597326"/>
    </cofactor>
</comment>
<comment type="similarity">
    <text evidence="2">Belongs to the class-V pyridoxal-phosphate-dependent aminotransferase family. MOCOS subfamily.</text>
</comment>
<dbReference type="EC" id="2.8.1.9" evidence="2"/>
<dbReference type="EMBL" id="CH479201">
    <property type="protein sequence ID" value="EDW29993.1"/>
    <property type="molecule type" value="Genomic_DNA"/>
</dbReference>
<dbReference type="SMR" id="B4H0S8"/>
<dbReference type="STRING" id="7234.B4H0S8"/>
<dbReference type="EnsemblMetazoa" id="FBtr0181408">
    <property type="protein sequence ID" value="FBpp0179900"/>
    <property type="gene ID" value="FBgn0153397"/>
</dbReference>
<dbReference type="EnsemblMetazoa" id="XM_002024516.2">
    <property type="protein sequence ID" value="XP_002024552.1"/>
    <property type="gene ID" value="LOC6599378"/>
</dbReference>
<dbReference type="GeneID" id="6599378"/>
<dbReference type="KEGG" id="dpe:6599378"/>
<dbReference type="CTD" id="4118"/>
<dbReference type="eggNOG" id="KOG2142">
    <property type="taxonomic scope" value="Eukaryota"/>
</dbReference>
<dbReference type="HOGENOM" id="CLU_010913_0_1_1"/>
<dbReference type="OMA" id="PCTRCQM"/>
<dbReference type="OrthoDB" id="420046at2759"/>
<dbReference type="PhylomeDB" id="B4H0S8"/>
<dbReference type="Proteomes" id="UP000008744">
    <property type="component" value="Unassembled WGS sequence"/>
</dbReference>
<dbReference type="GO" id="GO:0016829">
    <property type="term" value="F:lyase activity"/>
    <property type="evidence" value="ECO:0007669"/>
    <property type="project" value="UniProtKB-UniRule"/>
</dbReference>
<dbReference type="GO" id="GO:0008265">
    <property type="term" value="F:molybdenum cofactor sulfurtransferase activity"/>
    <property type="evidence" value="ECO:0000250"/>
    <property type="project" value="UniProtKB"/>
</dbReference>
<dbReference type="GO" id="GO:0030151">
    <property type="term" value="F:molybdenum ion binding"/>
    <property type="evidence" value="ECO:0007669"/>
    <property type="project" value="UniProtKB-UniRule"/>
</dbReference>
<dbReference type="GO" id="GO:0030170">
    <property type="term" value="F:pyridoxal phosphate binding"/>
    <property type="evidence" value="ECO:0007669"/>
    <property type="project" value="UniProtKB-UniRule"/>
</dbReference>
<dbReference type="GO" id="GO:0006777">
    <property type="term" value="P:Mo-molybdopterin cofactor biosynthetic process"/>
    <property type="evidence" value="ECO:0007669"/>
    <property type="project" value="UniProtKB-UniRule"/>
</dbReference>
<dbReference type="GO" id="GO:0043545">
    <property type="term" value="P:molybdopterin cofactor metabolic process"/>
    <property type="evidence" value="ECO:0000250"/>
    <property type="project" value="UniProtKB"/>
</dbReference>
<dbReference type="FunFam" id="3.40.640.10:FF:000119">
    <property type="entry name" value="Molybdenum cofactor sulfurase"/>
    <property type="match status" value="1"/>
</dbReference>
<dbReference type="FunFam" id="3.90.1150.10:FF:000079">
    <property type="entry name" value="Molybdenum cofactor sulfurase"/>
    <property type="match status" value="1"/>
</dbReference>
<dbReference type="Gene3D" id="3.90.1150.10">
    <property type="entry name" value="Aspartate Aminotransferase, domain 1"/>
    <property type="match status" value="1"/>
</dbReference>
<dbReference type="Gene3D" id="3.40.640.10">
    <property type="entry name" value="Type I PLP-dependent aspartate aminotransferase-like (Major domain)"/>
    <property type="match status" value="1"/>
</dbReference>
<dbReference type="HAMAP" id="MF_03050">
    <property type="entry name" value="MOCOS"/>
    <property type="match status" value="1"/>
</dbReference>
<dbReference type="InterPro" id="IPR000192">
    <property type="entry name" value="Aminotrans_V_dom"/>
</dbReference>
<dbReference type="InterPro" id="IPR005302">
    <property type="entry name" value="MoCF_Sase_C"/>
</dbReference>
<dbReference type="InterPro" id="IPR028886">
    <property type="entry name" value="MoCo_sulfurase"/>
</dbReference>
<dbReference type="InterPro" id="IPR005303">
    <property type="entry name" value="MOCOS_middle"/>
</dbReference>
<dbReference type="InterPro" id="IPR015424">
    <property type="entry name" value="PyrdxlP-dep_Trfase"/>
</dbReference>
<dbReference type="InterPro" id="IPR015421">
    <property type="entry name" value="PyrdxlP-dep_Trfase_major"/>
</dbReference>
<dbReference type="InterPro" id="IPR015422">
    <property type="entry name" value="PyrdxlP-dep_Trfase_small"/>
</dbReference>
<dbReference type="InterPro" id="IPR011037">
    <property type="entry name" value="Pyrv_Knase-like_insert_dom_sf"/>
</dbReference>
<dbReference type="PANTHER" id="PTHR14237:SF19">
    <property type="entry name" value="MITOCHONDRIAL AMIDOXIME REDUCING COMPONENT 1"/>
    <property type="match status" value="1"/>
</dbReference>
<dbReference type="PANTHER" id="PTHR14237">
    <property type="entry name" value="MOLYBDOPTERIN COFACTOR SULFURASE MOSC"/>
    <property type="match status" value="1"/>
</dbReference>
<dbReference type="Pfam" id="PF00266">
    <property type="entry name" value="Aminotran_5"/>
    <property type="match status" value="2"/>
</dbReference>
<dbReference type="Pfam" id="PF03473">
    <property type="entry name" value="MOSC"/>
    <property type="match status" value="1"/>
</dbReference>
<dbReference type="Pfam" id="PF03476">
    <property type="entry name" value="MOSC_N"/>
    <property type="match status" value="1"/>
</dbReference>
<dbReference type="SUPFAM" id="SSF141673">
    <property type="entry name" value="MOSC N-terminal domain-like"/>
    <property type="match status" value="1"/>
</dbReference>
<dbReference type="SUPFAM" id="SSF50800">
    <property type="entry name" value="PK beta-barrel domain-like"/>
    <property type="match status" value="1"/>
</dbReference>
<dbReference type="SUPFAM" id="SSF53383">
    <property type="entry name" value="PLP-dependent transferases"/>
    <property type="match status" value="1"/>
</dbReference>
<dbReference type="PROSITE" id="PS51340">
    <property type="entry name" value="MOSC"/>
    <property type="match status" value="1"/>
</dbReference>
<feature type="chain" id="PRO_0000369374" description="Molybdenum cofactor sulfurase">
    <location>
        <begin position="1"/>
        <end position="796"/>
    </location>
</feature>
<feature type="domain" description="MOSC" evidence="2">
    <location>
        <begin position="650"/>
        <end position="796"/>
    </location>
</feature>
<feature type="active site" evidence="2">
    <location>
        <position position="418"/>
    </location>
</feature>
<feature type="modified residue" description="N6-(pyridoxal phosphate)lysine" evidence="2">
    <location>
        <position position="246"/>
    </location>
</feature>
<feature type="modified residue" description="Phosphoserine" evidence="1">
    <location>
        <position position="752"/>
    </location>
</feature>
<reference key="1">
    <citation type="journal article" date="2007" name="Nature">
        <title>Evolution of genes and genomes on the Drosophila phylogeny.</title>
        <authorList>
            <consortium name="Drosophila 12 genomes consortium"/>
        </authorList>
    </citation>
    <scope>NUCLEOTIDE SEQUENCE [LARGE SCALE GENOMIC DNA]</scope>
    <source>
        <strain>MSH-3 / Tucson 14011-0111.49</strain>
    </source>
</reference>
<name>MOCOS_DROPE</name>
<keyword id="KW-0501">Molybdenum cofactor biosynthesis</keyword>
<keyword id="KW-0597">Phosphoprotein</keyword>
<keyword id="KW-0663">Pyridoxal phosphate</keyword>
<keyword id="KW-1185">Reference proteome</keyword>
<keyword id="KW-0808">Transferase</keyword>